<sequence>MRTSQYLLSTLKETPADAEVISHQLMLRAGMIRKLASGLYTWLPTGVRVLKKVENIVREEMNNAGAIEVSMPVVQPADLWQESGRWEQYGPELLRFVDRGERPFVLGPTHEEVITDLIRNELSSYKQLPLNFYQIQTKFRDEVRPRFGVMRSREFLMKDAYSFHTSQESLQETYDAMYAAYSKIFSRMGLDFRAVQADTGSIGGSASHEFQVLAQSGEDDVVFSDTSDYAANIELAEAIAPKEPRAAATQEMTLVDTPNAKTIAELVEQFNLPIKKTVKTLLVKAVEGSSFPLVALLVRGDHELNEVKAEKLPQVASPLTFATEEEIRAVVKAGPGSLGPVNMPIPVVIDRTVAAMSDFTAGANIDGKHYFGINWDRDVATPEVADIRNVVAGDPSPDGQGTLLIKRGIEVGHIFQLGTKYSEALKASVQGEDGRNQILTMGCYGIGVTRVVAAAIEQNYDERGIVWPDAIAPFQVAILPMNMHKSFRVQELAEKLYSELRAQGIEVLLDDRKERPGVMFADMELIGIPHTIVLGDRNLDNDDIEYKYRRNGEKQLIKTGDIVEYLVKQIKG</sequence>
<organism>
    <name type="scientific">Escherichia coli O157:H7 (strain EC4115 / EHEC)</name>
    <dbReference type="NCBI Taxonomy" id="444450"/>
    <lineage>
        <taxon>Bacteria</taxon>
        <taxon>Pseudomonadati</taxon>
        <taxon>Pseudomonadota</taxon>
        <taxon>Gammaproteobacteria</taxon>
        <taxon>Enterobacterales</taxon>
        <taxon>Enterobacteriaceae</taxon>
        <taxon>Escherichia</taxon>
    </lineage>
</organism>
<name>SYP_ECO5E</name>
<proteinExistence type="inferred from homology"/>
<comment type="function">
    <text evidence="1">Catalyzes the attachment of proline to tRNA(Pro) in a two-step reaction: proline is first activated by ATP to form Pro-AMP and then transferred to the acceptor end of tRNA(Pro). As ProRS can inadvertently accommodate and process non-cognate amino acids such as alanine and cysteine, to avoid such errors it has two additional distinct editing activities against alanine. One activity is designated as 'pretransfer' editing and involves the tRNA(Pro)-independent hydrolysis of activated Ala-AMP. The other activity is designated 'posttransfer' editing and involves deacylation of mischarged Ala-tRNA(Pro). The misacylated Cys-tRNA(Pro) is not edited by ProRS.</text>
</comment>
<comment type="catalytic activity">
    <reaction evidence="1">
        <text>tRNA(Pro) + L-proline + ATP = L-prolyl-tRNA(Pro) + AMP + diphosphate</text>
        <dbReference type="Rhea" id="RHEA:14305"/>
        <dbReference type="Rhea" id="RHEA-COMP:9700"/>
        <dbReference type="Rhea" id="RHEA-COMP:9702"/>
        <dbReference type="ChEBI" id="CHEBI:30616"/>
        <dbReference type="ChEBI" id="CHEBI:33019"/>
        <dbReference type="ChEBI" id="CHEBI:60039"/>
        <dbReference type="ChEBI" id="CHEBI:78442"/>
        <dbReference type="ChEBI" id="CHEBI:78532"/>
        <dbReference type="ChEBI" id="CHEBI:456215"/>
        <dbReference type="EC" id="6.1.1.15"/>
    </reaction>
</comment>
<comment type="subunit">
    <text evidence="1">Homodimer.</text>
</comment>
<comment type="subcellular location">
    <subcellularLocation>
        <location evidence="1">Cytoplasm</location>
    </subcellularLocation>
</comment>
<comment type="domain">
    <text evidence="1">Consists of three domains: the N-terminal catalytic domain, the editing domain and the C-terminal anticodon-binding domain.</text>
</comment>
<comment type="similarity">
    <text evidence="1">Belongs to the class-II aminoacyl-tRNA synthetase family. ProS type 1 subfamily.</text>
</comment>
<reference key="1">
    <citation type="journal article" date="2011" name="Proc. Natl. Acad. Sci. U.S.A.">
        <title>Genomic anatomy of Escherichia coli O157:H7 outbreaks.</title>
        <authorList>
            <person name="Eppinger M."/>
            <person name="Mammel M.K."/>
            <person name="Leclerc J.E."/>
            <person name="Ravel J."/>
            <person name="Cebula T.A."/>
        </authorList>
    </citation>
    <scope>NUCLEOTIDE SEQUENCE [LARGE SCALE GENOMIC DNA]</scope>
    <source>
        <strain>EC4115 / EHEC</strain>
    </source>
</reference>
<keyword id="KW-0030">Aminoacyl-tRNA synthetase</keyword>
<keyword id="KW-0067">ATP-binding</keyword>
<keyword id="KW-0963">Cytoplasm</keyword>
<keyword id="KW-0436">Ligase</keyword>
<keyword id="KW-0547">Nucleotide-binding</keyword>
<keyword id="KW-0648">Protein biosynthesis</keyword>
<feature type="chain" id="PRO_1000199380" description="Proline--tRNA ligase">
    <location>
        <begin position="1"/>
        <end position="572"/>
    </location>
</feature>
<gene>
    <name evidence="1" type="primary">proS</name>
    <name type="ordered locus">ECH74115_0205</name>
</gene>
<protein>
    <recommendedName>
        <fullName evidence="1">Proline--tRNA ligase</fullName>
        <ecNumber evidence="1">6.1.1.15</ecNumber>
    </recommendedName>
    <alternativeName>
        <fullName evidence="1">Prolyl-tRNA synthetase</fullName>
        <shortName evidence="1">ProRS</shortName>
    </alternativeName>
</protein>
<evidence type="ECO:0000255" key="1">
    <source>
        <dbReference type="HAMAP-Rule" id="MF_01569"/>
    </source>
</evidence>
<dbReference type="EC" id="6.1.1.15" evidence="1"/>
<dbReference type="EMBL" id="CP001164">
    <property type="protein sequence ID" value="ACI37382.1"/>
    <property type="molecule type" value="Genomic_DNA"/>
</dbReference>
<dbReference type="RefSeq" id="WP_001260720.1">
    <property type="nucleotide sequence ID" value="NC_011353.1"/>
</dbReference>
<dbReference type="SMR" id="B5Z0H4"/>
<dbReference type="KEGG" id="ecf:ECH74115_0205"/>
<dbReference type="HOGENOM" id="CLU_016739_0_0_6"/>
<dbReference type="GO" id="GO:0005829">
    <property type="term" value="C:cytosol"/>
    <property type="evidence" value="ECO:0007669"/>
    <property type="project" value="TreeGrafter"/>
</dbReference>
<dbReference type="GO" id="GO:0002161">
    <property type="term" value="F:aminoacyl-tRNA deacylase activity"/>
    <property type="evidence" value="ECO:0007669"/>
    <property type="project" value="InterPro"/>
</dbReference>
<dbReference type="GO" id="GO:0005524">
    <property type="term" value="F:ATP binding"/>
    <property type="evidence" value="ECO:0007669"/>
    <property type="project" value="UniProtKB-UniRule"/>
</dbReference>
<dbReference type="GO" id="GO:0004827">
    <property type="term" value="F:proline-tRNA ligase activity"/>
    <property type="evidence" value="ECO:0007669"/>
    <property type="project" value="UniProtKB-UniRule"/>
</dbReference>
<dbReference type="GO" id="GO:0006433">
    <property type="term" value="P:prolyl-tRNA aminoacylation"/>
    <property type="evidence" value="ECO:0007669"/>
    <property type="project" value="UniProtKB-UniRule"/>
</dbReference>
<dbReference type="CDD" id="cd04334">
    <property type="entry name" value="ProRS-INS"/>
    <property type="match status" value="1"/>
</dbReference>
<dbReference type="CDD" id="cd00861">
    <property type="entry name" value="ProRS_anticodon_short"/>
    <property type="match status" value="1"/>
</dbReference>
<dbReference type="CDD" id="cd00779">
    <property type="entry name" value="ProRS_core_prok"/>
    <property type="match status" value="1"/>
</dbReference>
<dbReference type="FunFam" id="3.30.930.10:FF:000012">
    <property type="entry name" value="Proline--tRNA ligase"/>
    <property type="match status" value="1"/>
</dbReference>
<dbReference type="FunFam" id="3.30.930.10:FF:000097">
    <property type="entry name" value="Proline--tRNA ligase"/>
    <property type="match status" value="1"/>
</dbReference>
<dbReference type="FunFam" id="3.40.50.800:FF:000006">
    <property type="entry name" value="Proline--tRNA ligase"/>
    <property type="match status" value="1"/>
</dbReference>
<dbReference type="FunFam" id="3.90.960.10:FF:000001">
    <property type="entry name" value="Proline--tRNA ligase"/>
    <property type="match status" value="1"/>
</dbReference>
<dbReference type="Gene3D" id="3.40.50.800">
    <property type="entry name" value="Anticodon-binding domain"/>
    <property type="match status" value="1"/>
</dbReference>
<dbReference type="Gene3D" id="3.30.930.10">
    <property type="entry name" value="Bira Bifunctional Protein, Domain 2"/>
    <property type="match status" value="2"/>
</dbReference>
<dbReference type="Gene3D" id="3.90.960.10">
    <property type="entry name" value="YbaK/aminoacyl-tRNA synthetase-associated domain"/>
    <property type="match status" value="1"/>
</dbReference>
<dbReference type="HAMAP" id="MF_01569">
    <property type="entry name" value="Pro_tRNA_synth_type1"/>
    <property type="match status" value="1"/>
</dbReference>
<dbReference type="InterPro" id="IPR002314">
    <property type="entry name" value="aa-tRNA-synt_IIb"/>
</dbReference>
<dbReference type="InterPro" id="IPR006195">
    <property type="entry name" value="aa-tRNA-synth_II"/>
</dbReference>
<dbReference type="InterPro" id="IPR045864">
    <property type="entry name" value="aa-tRNA-synth_II/BPL/LPL"/>
</dbReference>
<dbReference type="InterPro" id="IPR004154">
    <property type="entry name" value="Anticodon-bd"/>
</dbReference>
<dbReference type="InterPro" id="IPR036621">
    <property type="entry name" value="Anticodon-bd_dom_sf"/>
</dbReference>
<dbReference type="InterPro" id="IPR002316">
    <property type="entry name" value="Pro-tRNA-ligase_IIa"/>
</dbReference>
<dbReference type="InterPro" id="IPR004500">
    <property type="entry name" value="Pro-tRNA-synth_IIa_bac-type"/>
</dbReference>
<dbReference type="InterPro" id="IPR023717">
    <property type="entry name" value="Pro-tRNA-Synthase_IIa_type1"/>
</dbReference>
<dbReference type="InterPro" id="IPR050062">
    <property type="entry name" value="Pro-tRNA_synthetase"/>
</dbReference>
<dbReference type="InterPro" id="IPR044140">
    <property type="entry name" value="ProRS_anticodon_short"/>
</dbReference>
<dbReference type="InterPro" id="IPR033730">
    <property type="entry name" value="ProRS_core_prok"/>
</dbReference>
<dbReference type="InterPro" id="IPR036754">
    <property type="entry name" value="YbaK/aa-tRNA-synt-asso_dom_sf"/>
</dbReference>
<dbReference type="InterPro" id="IPR007214">
    <property type="entry name" value="YbaK/aa-tRNA-synth-assoc-dom"/>
</dbReference>
<dbReference type="NCBIfam" id="NF006625">
    <property type="entry name" value="PRK09194.1"/>
    <property type="match status" value="1"/>
</dbReference>
<dbReference type="NCBIfam" id="TIGR00409">
    <property type="entry name" value="proS_fam_II"/>
    <property type="match status" value="1"/>
</dbReference>
<dbReference type="PANTHER" id="PTHR42753">
    <property type="entry name" value="MITOCHONDRIAL RIBOSOME PROTEIN L39/PROLYL-TRNA LIGASE FAMILY MEMBER"/>
    <property type="match status" value="1"/>
</dbReference>
<dbReference type="PANTHER" id="PTHR42753:SF2">
    <property type="entry name" value="PROLINE--TRNA LIGASE"/>
    <property type="match status" value="1"/>
</dbReference>
<dbReference type="Pfam" id="PF03129">
    <property type="entry name" value="HGTP_anticodon"/>
    <property type="match status" value="1"/>
</dbReference>
<dbReference type="Pfam" id="PF00587">
    <property type="entry name" value="tRNA-synt_2b"/>
    <property type="match status" value="1"/>
</dbReference>
<dbReference type="Pfam" id="PF04073">
    <property type="entry name" value="tRNA_edit"/>
    <property type="match status" value="1"/>
</dbReference>
<dbReference type="PIRSF" id="PIRSF001535">
    <property type="entry name" value="ProRS_1"/>
    <property type="match status" value="1"/>
</dbReference>
<dbReference type="PRINTS" id="PR01046">
    <property type="entry name" value="TRNASYNTHPRO"/>
</dbReference>
<dbReference type="SUPFAM" id="SSF52954">
    <property type="entry name" value="Class II aaRS ABD-related"/>
    <property type="match status" value="1"/>
</dbReference>
<dbReference type="SUPFAM" id="SSF55681">
    <property type="entry name" value="Class II aaRS and biotin synthetases"/>
    <property type="match status" value="1"/>
</dbReference>
<dbReference type="SUPFAM" id="SSF55826">
    <property type="entry name" value="YbaK/ProRS associated domain"/>
    <property type="match status" value="1"/>
</dbReference>
<dbReference type="PROSITE" id="PS50862">
    <property type="entry name" value="AA_TRNA_LIGASE_II"/>
    <property type="match status" value="1"/>
</dbReference>
<accession>B5Z0H4</accession>